<gene>
    <name type="primary">ZNF639</name>
    <name type="synonym">ZASC1</name>
</gene>
<name>ZN639_HUMAN</name>
<reference key="1">
    <citation type="journal article" date="2005" name="Exp. Cell Res.">
        <title>Nuclear translocation of alphaN-catenin by the novel zinc finger transcriptional repressor ZASC1.</title>
        <authorList>
            <person name="Bogaerts S."/>
            <person name="Vanlandschoot A."/>
            <person name="van Hengel J."/>
            <person name="van Roy F."/>
        </authorList>
    </citation>
    <scope>NUCLEOTIDE SEQUENCE [MRNA]</scope>
    <scope>FUNCTION</scope>
    <scope>INTERACTION WITH CTNNA2</scope>
    <scope>SUBCELLULAR LOCATION</scope>
    <scope>TISSUE SPECIFICITY</scope>
    <source>
        <tissue>Kidney</tissue>
    </source>
</reference>
<reference key="2">
    <citation type="journal article" date="2003" name="Cancer Res.">
        <title>Identification of ZASC1 encoding a Kruppel-like zinc finger protein as a novel target for 3q26 amplification in esophageal squamous cell carcinomas.</title>
        <authorList>
            <person name="Imoto I."/>
            <person name="Yuki Y."/>
            <person name="Sonoda I."/>
            <person name="Ito T."/>
            <person name="Shimada Y."/>
            <person name="Imamura M."/>
            <person name="Inazawa J."/>
        </authorList>
    </citation>
    <scope>NUCLEOTIDE SEQUENCE [MRNA]</scope>
    <scope>SUBCELLULAR LOCATION</scope>
</reference>
<reference key="3">
    <citation type="journal article" date="2006" name="Nature">
        <title>The DNA sequence, annotation and analysis of human chromosome 3.</title>
        <authorList>
            <person name="Muzny D.M."/>
            <person name="Scherer S.E."/>
            <person name="Kaul R."/>
            <person name="Wang J."/>
            <person name="Yu J."/>
            <person name="Sudbrak R."/>
            <person name="Buhay C.J."/>
            <person name="Chen R."/>
            <person name="Cree A."/>
            <person name="Ding Y."/>
            <person name="Dugan-Rocha S."/>
            <person name="Gill R."/>
            <person name="Gunaratne P."/>
            <person name="Harris R.A."/>
            <person name="Hawes A.C."/>
            <person name="Hernandez J."/>
            <person name="Hodgson A.V."/>
            <person name="Hume J."/>
            <person name="Jackson A."/>
            <person name="Khan Z.M."/>
            <person name="Kovar-Smith C."/>
            <person name="Lewis L.R."/>
            <person name="Lozado R.J."/>
            <person name="Metzker M.L."/>
            <person name="Milosavljevic A."/>
            <person name="Miner G.R."/>
            <person name="Morgan M.B."/>
            <person name="Nazareth L.V."/>
            <person name="Scott G."/>
            <person name="Sodergren E."/>
            <person name="Song X.-Z."/>
            <person name="Steffen D."/>
            <person name="Wei S."/>
            <person name="Wheeler D.A."/>
            <person name="Wright M.W."/>
            <person name="Worley K.C."/>
            <person name="Yuan Y."/>
            <person name="Zhang Z."/>
            <person name="Adams C.Q."/>
            <person name="Ansari-Lari M.A."/>
            <person name="Ayele M."/>
            <person name="Brown M.J."/>
            <person name="Chen G."/>
            <person name="Chen Z."/>
            <person name="Clendenning J."/>
            <person name="Clerc-Blankenburg K.P."/>
            <person name="Chen R."/>
            <person name="Chen Z."/>
            <person name="Davis C."/>
            <person name="Delgado O."/>
            <person name="Dinh H.H."/>
            <person name="Dong W."/>
            <person name="Draper H."/>
            <person name="Ernst S."/>
            <person name="Fu G."/>
            <person name="Gonzalez-Garay M.L."/>
            <person name="Garcia D.K."/>
            <person name="Gillett W."/>
            <person name="Gu J."/>
            <person name="Hao B."/>
            <person name="Haugen E."/>
            <person name="Havlak P."/>
            <person name="He X."/>
            <person name="Hennig S."/>
            <person name="Hu S."/>
            <person name="Huang W."/>
            <person name="Jackson L.R."/>
            <person name="Jacob L.S."/>
            <person name="Kelly S.H."/>
            <person name="Kube M."/>
            <person name="Levy R."/>
            <person name="Li Z."/>
            <person name="Liu B."/>
            <person name="Liu J."/>
            <person name="Liu W."/>
            <person name="Lu J."/>
            <person name="Maheshwari M."/>
            <person name="Nguyen B.-V."/>
            <person name="Okwuonu G.O."/>
            <person name="Palmeiri A."/>
            <person name="Pasternak S."/>
            <person name="Perez L.M."/>
            <person name="Phelps K.A."/>
            <person name="Plopper F.J."/>
            <person name="Qiang B."/>
            <person name="Raymond C."/>
            <person name="Rodriguez R."/>
            <person name="Saenphimmachak C."/>
            <person name="Santibanez J."/>
            <person name="Shen H."/>
            <person name="Shen Y."/>
            <person name="Subramanian S."/>
            <person name="Tabor P.E."/>
            <person name="Verduzco D."/>
            <person name="Waldron L."/>
            <person name="Wang J."/>
            <person name="Wang J."/>
            <person name="Wang Q."/>
            <person name="Williams G.A."/>
            <person name="Wong G.K.-S."/>
            <person name="Yao Z."/>
            <person name="Zhang J."/>
            <person name="Zhang X."/>
            <person name="Zhao G."/>
            <person name="Zhou J."/>
            <person name="Zhou Y."/>
            <person name="Nelson D."/>
            <person name="Lehrach H."/>
            <person name="Reinhardt R."/>
            <person name="Naylor S.L."/>
            <person name="Yang H."/>
            <person name="Olson M."/>
            <person name="Weinstock G."/>
            <person name="Gibbs R.A."/>
        </authorList>
    </citation>
    <scope>NUCLEOTIDE SEQUENCE [LARGE SCALE GENOMIC DNA]</scope>
</reference>
<reference key="4">
    <citation type="submission" date="2005-09" db="EMBL/GenBank/DDBJ databases">
        <authorList>
            <person name="Mural R.J."/>
            <person name="Istrail S."/>
            <person name="Sutton G.G."/>
            <person name="Florea L."/>
            <person name="Halpern A.L."/>
            <person name="Mobarry C.M."/>
            <person name="Lippert R."/>
            <person name="Walenz B."/>
            <person name="Shatkay H."/>
            <person name="Dew I."/>
            <person name="Miller J.R."/>
            <person name="Flanigan M.J."/>
            <person name="Edwards N.J."/>
            <person name="Bolanos R."/>
            <person name="Fasulo D."/>
            <person name="Halldorsson B.V."/>
            <person name="Hannenhalli S."/>
            <person name="Turner R."/>
            <person name="Yooseph S."/>
            <person name="Lu F."/>
            <person name="Nusskern D.R."/>
            <person name="Shue B.C."/>
            <person name="Zheng X.H."/>
            <person name="Zhong F."/>
            <person name="Delcher A.L."/>
            <person name="Huson D.H."/>
            <person name="Kravitz S.A."/>
            <person name="Mouchard L."/>
            <person name="Reinert K."/>
            <person name="Remington K.A."/>
            <person name="Clark A.G."/>
            <person name="Waterman M.S."/>
            <person name="Eichler E.E."/>
            <person name="Adams M.D."/>
            <person name="Hunkapiller M.W."/>
            <person name="Myers E.W."/>
            <person name="Venter J.C."/>
        </authorList>
    </citation>
    <scope>NUCLEOTIDE SEQUENCE [LARGE SCALE GENOMIC DNA]</scope>
</reference>
<reference key="5">
    <citation type="journal article" date="2004" name="Genome Res.">
        <title>The status, quality, and expansion of the NIH full-length cDNA project: the Mammalian Gene Collection (MGC).</title>
        <authorList>
            <consortium name="The MGC Project Team"/>
        </authorList>
    </citation>
    <scope>NUCLEOTIDE SEQUENCE [LARGE SCALE MRNA]</scope>
    <source>
        <tissue>Brain</tissue>
        <tissue>Uterus</tissue>
    </source>
</reference>
<reference key="6">
    <citation type="journal article" date="2007" name="Genome Res.">
        <title>Functional persistence of exonized mammalian-wide interspersed repeat elements (MIRs).</title>
        <authorList>
            <person name="Krull M."/>
            <person name="Petrusma M."/>
            <person name="Makalowski W."/>
            <person name="Brosius J."/>
            <person name="Schmitz J."/>
        </authorList>
    </citation>
    <scope>NUCLEOTIDE SEQUENCE [MRNA] OF 50-190</scope>
</reference>
<reference key="7">
    <citation type="journal article" date="2008" name="Proc. Natl. Acad. Sci. U.S.A.">
        <title>A quantitative atlas of mitotic phosphorylation.</title>
        <authorList>
            <person name="Dephoure N."/>
            <person name="Zhou C."/>
            <person name="Villen J."/>
            <person name="Beausoleil S.A."/>
            <person name="Bakalarski C.E."/>
            <person name="Elledge S.J."/>
            <person name="Gygi S.P."/>
        </authorList>
    </citation>
    <scope>IDENTIFICATION BY MASS SPECTROMETRY [LARGE SCALE ANALYSIS]</scope>
    <source>
        <tissue>Cervix carcinoma</tissue>
    </source>
</reference>
<reference key="8">
    <citation type="journal article" date="2009" name="Sci. Signal.">
        <title>Quantitative phosphoproteomic analysis of T cell receptor signaling reveals system-wide modulation of protein-protein interactions.</title>
        <authorList>
            <person name="Mayya V."/>
            <person name="Lundgren D.H."/>
            <person name="Hwang S.-I."/>
            <person name="Rezaul K."/>
            <person name="Wu L."/>
            <person name="Eng J.K."/>
            <person name="Rodionov V."/>
            <person name="Han D.K."/>
        </authorList>
    </citation>
    <scope>PHOSPHORYLATION [LARGE SCALE ANALYSIS] AT SER-88</scope>
    <scope>IDENTIFICATION BY MASS SPECTROMETRY [LARGE SCALE ANALYSIS]</scope>
    <source>
        <tissue>Leukemic T-cell</tissue>
    </source>
</reference>
<reference key="9">
    <citation type="journal article" date="2011" name="Sci. Signal.">
        <title>System-wide temporal characterization of the proteome and phosphoproteome of human embryonic stem cell differentiation.</title>
        <authorList>
            <person name="Rigbolt K.T."/>
            <person name="Prokhorova T.A."/>
            <person name="Akimov V."/>
            <person name="Henningsen J."/>
            <person name="Johansen P.T."/>
            <person name="Kratchmarova I."/>
            <person name="Kassem M."/>
            <person name="Mann M."/>
            <person name="Olsen J.V."/>
            <person name="Blagoev B."/>
        </authorList>
    </citation>
    <scope>PHOSPHORYLATION [LARGE SCALE ANALYSIS] AT SER-60</scope>
    <scope>IDENTIFICATION BY MASS SPECTROMETRY [LARGE SCALE ANALYSIS]</scope>
</reference>
<reference key="10">
    <citation type="journal article" date="2013" name="J. Proteome Res.">
        <title>Toward a comprehensive characterization of a human cancer cell phosphoproteome.</title>
        <authorList>
            <person name="Zhou H."/>
            <person name="Di Palma S."/>
            <person name="Preisinger C."/>
            <person name="Peng M."/>
            <person name="Polat A.N."/>
            <person name="Heck A.J."/>
            <person name="Mohammed S."/>
        </authorList>
    </citation>
    <scope>PHOSPHORYLATION [LARGE SCALE ANALYSIS] AT SER-60 AND SER-88</scope>
    <scope>IDENTIFICATION BY MASS SPECTROMETRY [LARGE SCALE ANALYSIS]</scope>
    <source>
        <tissue>Cervix carcinoma</tissue>
        <tissue>Erythroleukemia</tissue>
    </source>
</reference>
<reference key="11">
    <citation type="journal article" date="2017" name="Nat. Struct. Mol. Biol.">
        <title>Site-specific mapping of the human SUMO proteome reveals co-modification with phosphorylation.</title>
        <authorList>
            <person name="Hendriks I.A."/>
            <person name="Lyon D."/>
            <person name="Young C."/>
            <person name="Jensen L.J."/>
            <person name="Vertegaal A.C."/>
            <person name="Nielsen M.L."/>
        </authorList>
    </citation>
    <scope>SUMOYLATION [LARGE SCALE ANALYSIS] AT LYS-76; LYS-177; LYS-181 AND LYS-226</scope>
    <scope>IDENTIFICATION BY MASS SPECTROMETRY [LARGE SCALE ANALYSIS]</scope>
</reference>
<comment type="function">
    <text evidence="4">Binds DNA and may function as a transcriptional repressor.</text>
</comment>
<comment type="subunit">
    <text evidence="4">Interacts with CTNNA2.</text>
</comment>
<comment type="interaction">
    <interactant intactId="EBI-947476">
        <id>Q9UID6</id>
    </interactant>
    <interactant intactId="EBI-3953920">
        <id>P26232</id>
        <label>CTNNA2</label>
    </interactant>
    <organismsDiffer>false</organismsDiffer>
    <experiments>7</experiments>
</comment>
<comment type="interaction">
    <interactant intactId="EBI-947476">
        <id>Q9UID6</id>
    </interactant>
    <interactant intactId="EBI-21603100">
        <id>P26378-2</id>
        <label>ELAVL4</label>
    </interactant>
    <organismsDiffer>false</organismsDiffer>
    <experiments>3</experiments>
</comment>
<comment type="interaction">
    <interactant intactId="EBI-947476">
        <id>Q9UID6</id>
    </interactant>
    <interactant intactId="EBI-348259">
        <id>Q96EZ8</id>
        <label>MCRS1</label>
    </interactant>
    <organismsDiffer>false</organismsDiffer>
    <experiments>3</experiments>
</comment>
<comment type="interaction">
    <interactant intactId="EBI-947476">
        <id>Q9UID6</id>
    </interactant>
    <interactant intactId="EBI-711788">
        <id>Q00013</id>
        <label>MPP1</label>
    </interactant>
    <organismsDiffer>false</organismsDiffer>
    <experiments>3</experiments>
</comment>
<comment type="interaction">
    <interactant intactId="EBI-947476">
        <id>Q9UID6</id>
    </interactant>
    <interactant intactId="EBI-1045072">
        <id>Q96T60</id>
        <label>PNKP</label>
    </interactant>
    <organismsDiffer>false</organismsDiffer>
    <experiments>6</experiments>
</comment>
<comment type="interaction">
    <interactant intactId="EBI-947476">
        <id>Q9UID6</id>
    </interactant>
    <interactant intactId="EBI-2798416">
        <id>Q99633</id>
        <label>PRPF18</label>
    </interactant>
    <organismsDiffer>false</organismsDiffer>
    <experiments>5</experiments>
</comment>
<comment type="interaction">
    <interactant intactId="EBI-947476">
        <id>Q9UID6</id>
    </interactant>
    <interactant intactId="EBI-2515601">
        <id>Q8N680</id>
        <label>ZBTB2</label>
    </interactant>
    <organismsDiffer>false</organismsDiffer>
    <experiments>7</experiments>
</comment>
<comment type="interaction">
    <interactant intactId="EBI-947476">
        <id>Q9UID6</id>
    </interactant>
    <interactant intactId="EBI-744471">
        <id>O43167</id>
        <label>ZBTB24</label>
    </interactant>
    <organismsDiffer>false</organismsDiffer>
    <experiments>3</experiments>
</comment>
<comment type="interaction">
    <interactant intactId="EBI-947476">
        <id>Q9UID6</id>
    </interactant>
    <interactant intactId="EBI-10177272">
        <id>P15622-3</id>
        <label>ZNF250</label>
    </interactant>
    <organismsDiffer>false</organismsDiffer>
    <experiments>3</experiments>
</comment>
<comment type="interaction">
    <interactant intactId="EBI-947476">
        <id>Q9UID6</id>
    </interactant>
    <interactant intactId="EBI-10240849">
        <id>Q3KQV3</id>
        <label>ZNF792</label>
    </interactant>
    <organismsDiffer>false</organismsDiffer>
    <experiments>3</experiments>
</comment>
<comment type="interaction">
    <interactant intactId="EBI-947476">
        <id>Q9UID6</id>
    </interactant>
    <interactant intactId="EBI-11962574">
        <id>Q96EG3</id>
        <label>ZNF837</label>
    </interactant>
    <organismsDiffer>false</organismsDiffer>
    <experiments>3</experiments>
</comment>
<comment type="subcellular location">
    <subcellularLocation>
        <location evidence="3 4">Nucleus</location>
    </subcellularLocation>
</comment>
<comment type="similarity">
    <text evidence="5">Belongs to the krueppel C2H2-type zinc-finger protein family.</text>
</comment>
<protein>
    <recommendedName>
        <fullName>Zinc finger protein 639</fullName>
    </recommendedName>
    <alternativeName>
        <fullName>Zinc finger protein ANC_2H01</fullName>
    </alternativeName>
    <alternativeName>
        <fullName>Zinc finger protein ZASC1</fullName>
    </alternativeName>
</protein>
<feature type="chain" id="PRO_0000047696" description="Zinc finger protein 639">
    <location>
        <begin position="1"/>
        <end position="485"/>
    </location>
</feature>
<feature type="zinc finger region" description="C2H2-type 1" evidence="1">
    <location>
        <begin position="204"/>
        <end position="227"/>
    </location>
</feature>
<feature type="zinc finger region" description="C2H2-type 2" evidence="1">
    <location>
        <begin position="233"/>
        <end position="255"/>
    </location>
</feature>
<feature type="zinc finger region" description="C2H2-type 3" evidence="1">
    <location>
        <begin position="260"/>
        <end position="283"/>
    </location>
</feature>
<feature type="zinc finger region" description="C2H2-type 4" evidence="1">
    <location>
        <begin position="289"/>
        <end position="311"/>
    </location>
</feature>
<feature type="zinc finger region" description="C2H2-type 5" evidence="1">
    <location>
        <begin position="374"/>
        <end position="397"/>
    </location>
</feature>
<feature type="zinc finger region" description="C2H2-type 6" evidence="1">
    <location>
        <begin position="403"/>
        <end position="425"/>
    </location>
</feature>
<feature type="zinc finger region" description="C2H2-type 7" evidence="1">
    <location>
        <begin position="431"/>
        <end position="454"/>
    </location>
</feature>
<feature type="zinc finger region" description="C2H2-type 8" evidence="1">
    <location>
        <begin position="460"/>
        <end position="482"/>
    </location>
</feature>
<feature type="region of interest" description="Disordered" evidence="2">
    <location>
        <begin position="1"/>
        <end position="20"/>
    </location>
</feature>
<feature type="region of interest" description="Interaction with CTNNA2" evidence="4">
    <location>
        <begin position="371"/>
        <end position="455"/>
    </location>
</feature>
<feature type="compositionally biased region" description="Basic residues" evidence="2">
    <location>
        <begin position="1"/>
        <end position="14"/>
    </location>
</feature>
<feature type="modified residue" description="Phosphoserine" evidence="7 8">
    <location>
        <position position="60"/>
    </location>
</feature>
<feature type="modified residue" description="Phosphoserine" evidence="6 8">
    <location>
        <position position="88"/>
    </location>
</feature>
<feature type="cross-link" description="Glycyl lysine isopeptide (Lys-Gly) (interchain with G-Cter in SUMO2)" evidence="9">
    <location>
        <position position="76"/>
    </location>
</feature>
<feature type="cross-link" description="Glycyl lysine isopeptide (Lys-Gly) (interchain with G-Cter in SUMO2)" evidence="9">
    <location>
        <position position="177"/>
    </location>
</feature>
<feature type="cross-link" description="Glycyl lysine isopeptide (Lys-Gly) (interchain with G-Cter in SUMO2)" evidence="9">
    <location>
        <position position="181"/>
    </location>
</feature>
<feature type="cross-link" description="Glycyl lysine isopeptide (Lys-Gly) (interchain with G-Cter in SUMO2)" evidence="9">
    <location>
        <position position="226"/>
    </location>
</feature>
<evidence type="ECO:0000255" key="1">
    <source>
        <dbReference type="PROSITE-ProRule" id="PRU00042"/>
    </source>
</evidence>
<evidence type="ECO:0000256" key="2">
    <source>
        <dbReference type="SAM" id="MobiDB-lite"/>
    </source>
</evidence>
<evidence type="ECO:0000269" key="3">
    <source>
    </source>
</evidence>
<evidence type="ECO:0000269" key="4">
    <source>
    </source>
</evidence>
<evidence type="ECO:0000305" key="5"/>
<evidence type="ECO:0007744" key="6">
    <source>
    </source>
</evidence>
<evidence type="ECO:0007744" key="7">
    <source>
    </source>
</evidence>
<evidence type="ECO:0007744" key="8">
    <source>
    </source>
</evidence>
<evidence type="ECO:0007744" key="9">
    <source>
    </source>
</evidence>
<keyword id="KW-0238">DNA-binding</keyword>
<keyword id="KW-1017">Isopeptide bond</keyword>
<keyword id="KW-0479">Metal-binding</keyword>
<keyword id="KW-0539">Nucleus</keyword>
<keyword id="KW-0597">Phosphoprotein</keyword>
<keyword id="KW-1267">Proteomics identification</keyword>
<keyword id="KW-1185">Reference proteome</keyword>
<keyword id="KW-0677">Repeat</keyword>
<keyword id="KW-0678">Repressor</keyword>
<keyword id="KW-0804">Transcription</keyword>
<keyword id="KW-0805">Transcription regulation</keyword>
<keyword id="KW-0832">Ubl conjugation</keyword>
<keyword id="KW-0862">Zinc</keyword>
<keyword id="KW-0863">Zinc-finger</keyword>
<sequence>MNEYPKKRKRKTLHPSRYSDSSGISRIADGFNGIFSDHCYSVCSMRQPDLKYFDNKDDDSDTETSNDLPKFADGIKARNRNQNYLVPSPVLRILDHTAFSTEKSADIVICDEECDSPESVNQQTQEESPIEVHTAEDVPIAVEVHAISEDYDIETENNSSESLQDQTDEEPPAKLCKILDKSQALNVTAQQKWPLLRANSSGLYKCELCEFNSKYFSDLKQHMILKHKRTDSNVCRVCKESFSTNMLLIEHAKLHEEDPYICKYCDYKTVIFENLSQHIADTHFSDHLYWCEQCDVQFSSSSELYLHFQEHSCDEQYLCQFCEHETNDPEDLHSHVVNEHACKLIELSDKYNNGEHGQYSLLSKITFDKCKNFFVCQVCGFRSRLHTNVNRHVAIEHTKIFPHVCDDCGKGFSSMLEYCKHLNSHLSEGIYLCQYCEYSTGQIEDLKIHLDFKHSADLPHKCSDCLMRFGNERELISHLPVHETT</sequence>
<proteinExistence type="evidence at protein level"/>
<accession>Q9UID6</accession>
<accession>A9X3Z9</accession>
<accession>D3DNR3</accession>
<organism>
    <name type="scientific">Homo sapiens</name>
    <name type="common">Human</name>
    <dbReference type="NCBI Taxonomy" id="9606"/>
    <lineage>
        <taxon>Eukaryota</taxon>
        <taxon>Metazoa</taxon>
        <taxon>Chordata</taxon>
        <taxon>Craniata</taxon>
        <taxon>Vertebrata</taxon>
        <taxon>Euteleostomi</taxon>
        <taxon>Mammalia</taxon>
        <taxon>Eutheria</taxon>
        <taxon>Euarchontoglires</taxon>
        <taxon>Primates</taxon>
        <taxon>Haplorrhini</taxon>
        <taxon>Catarrhini</taxon>
        <taxon>Hominidae</taxon>
        <taxon>Homo</taxon>
    </lineage>
</organism>
<dbReference type="EMBL" id="AF003924">
    <property type="protein sequence ID" value="AAF21240.1"/>
    <property type="molecule type" value="mRNA"/>
</dbReference>
<dbReference type="EMBL" id="AB097862">
    <property type="protein sequence ID" value="BAC77610.1"/>
    <property type="molecule type" value="mRNA"/>
</dbReference>
<dbReference type="EMBL" id="AC007823">
    <property type="status" value="NOT_ANNOTATED_CDS"/>
    <property type="molecule type" value="Genomic_DNA"/>
</dbReference>
<dbReference type="EMBL" id="CH471052">
    <property type="protein sequence ID" value="EAW78413.1"/>
    <property type="molecule type" value="Genomic_DNA"/>
</dbReference>
<dbReference type="EMBL" id="CH471052">
    <property type="protein sequence ID" value="EAW78414.1"/>
    <property type="molecule type" value="Genomic_DNA"/>
</dbReference>
<dbReference type="EMBL" id="CH471052">
    <property type="protein sequence ID" value="EAW78415.1"/>
    <property type="molecule type" value="Genomic_DNA"/>
</dbReference>
<dbReference type="EMBL" id="CH471052">
    <property type="protein sequence ID" value="EAW78416.1"/>
    <property type="molecule type" value="Genomic_DNA"/>
</dbReference>
<dbReference type="EMBL" id="BC020500">
    <property type="protein sequence ID" value="AAH20500.1"/>
    <property type="molecule type" value="mRNA"/>
</dbReference>
<dbReference type="EMBL" id="BC026181">
    <property type="protein sequence ID" value="AAH26181.1"/>
    <property type="molecule type" value="mRNA"/>
</dbReference>
<dbReference type="EMBL" id="DQ323613">
    <property type="protein sequence ID" value="ABD27860.1"/>
    <property type="molecule type" value="mRNA"/>
</dbReference>
<dbReference type="CCDS" id="CCDS3227.1"/>
<dbReference type="RefSeq" id="NP_001290354.1">
    <property type="nucleotide sequence ID" value="NM_001303425.2"/>
</dbReference>
<dbReference type="RefSeq" id="NP_001290355.1">
    <property type="nucleotide sequence ID" value="NM_001303426.2"/>
</dbReference>
<dbReference type="RefSeq" id="NP_001362729.1">
    <property type="nucleotide sequence ID" value="NM_001375800.1"/>
</dbReference>
<dbReference type="RefSeq" id="NP_001362731.1">
    <property type="nucleotide sequence ID" value="NM_001375802.1"/>
</dbReference>
<dbReference type="RefSeq" id="NP_001362732.1">
    <property type="nucleotide sequence ID" value="NM_001375803.1"/>
</dbReference>
<dbReference type="RefSeq" id="NP_001362733.1">
    <property type="nucleotide sequence ID" value="NM_001375804.1"/>
</dbReference>
<dbReference type="RefSeq" id="NP_001362734.1">
    <property type="nucleotide sequence ID" value="NM_001375805.1"/>
</dbReference>
<dbReference type="RefSeq" id="NP_001362735.1">
    <property type="nucleotide sequence ID" value="NM_001375806.1"/>
</dbReference>
<dbReference type="RefSeq" id="NP_001362736.1">
    <property type="nucleotide sequence ID" value="NM_001375807.1"/>
</dbReference>
<dbReference type="RefSeq" id="NP_057415.1">
    <property type="nucleotide sequence ID" value="NM_016331.3"/>
</dbReference>
<dbReference type="RefSeq" id="XP_016862039.1">
    <property type="nucleotide sequence ID" value="XM_017006550.2"/>
</dbReference>
<dbReference type="RefSeq" id="XP_016862040.1">
    <property type="nucleotide sequence ID" value="XM_017006551.1"/>
</dbReference>
<dbReference type="RefSeq" id="XP_016862041.1">
    <property type="nucleotide sequence ID" value="XM_017006552.1"/>
</dbReference>
<dbReference type="RefSeq" id="XP_016862042.1">
    <property type="nucleotide sequence ID" value="XM_017006553.2"/>
</dbReference>
<dbReference type="RefSeq" id="XP_047304213.1">
    <property type="nucleotide sequence ID" value="XM_047448257.1"/>
</dbReference>
<dbReference type="RefSeq" id="XP_047304214.1">
    <property type="nucleotide sequence ID" value="XM_047448258.1"/>
</dbReference>
<dbReference type="RefSeq" id="XP_054202721.1">
    <property type="nucleotide sequence ID" value="XM_054346746.1"/>
</dbReference>
<dbReference type="RefSeq" id="XP_054202722.1">
    <property type="nucleotide sequence ID" value="XM_054346747.1"/>
</dbReference>
<dbReference type="RefSeq" id="XP_054202723.1">
    <property type="nucleotide sequence ID" value="XM_054346748.1"/>
</dbReference>
<dbReference type="RefSeq" id="XP_054202724.1">
    <property type="nucleotide sequence ID" value="XM_054346749.1"/>
</dbReference>
<dbReference type="SMR" id="Q9UID6"/>
<dbReference type="BioGRID" id="119367">
    <property type="interactions" value="43"/>
</dbReference>
<dbReference type="FunCoup" id="Q9UID6">
    <property type="interactions" value="3440"/>
</dbReference>
<dbReference type="IntAct" id="Q9UID6">
    <property type="interactions" value="28"/>
</dbReference>
<dbReference type="STRING" id="9606.ENSP00000325634"/>
<dbReference type="iPTMnet" id="Q9UID6"/>
<dbReference type="PhosphoSitePlus" id="Q9UID6"/>
<dbReference type="BioMuta" id="ZNF639"/>
<dbReference type="DMDM" id="51316968"/>
<dbReference type="jPOST" id="Q9UID6"/>
<dbReference type="MassIVE" id="Q9UID6"/>
<dbReference type="PaxDb" id="9606-ENSP00000325634"/>
<dbReference type="PeptideAtlas" id="Q9UID6"/>
<dbReference type="ProteomicsDB" id="84496"/>
<dbReference type="Pumba" id="Q9UID6"/>
<dbReference type="ABCD" id="Q9UID6">
    <property type="antibodies" value="2 sequenced antibodies"/>
</dbReference>
<dbReference type="Antibodypedia" id="46810">
    <property type="antibodies" value="83 antibodies from 20 providers"/>
</dbReference>
<dbReference type="DNASU" id="51193"/>
<dbReference type="Ensembl" id="ENST00000326361.7">
    <property type="protein sequence ID" value="ENSP00000325634.3"/>
    <property type="gene ID" value="ENSG00000121864.10"/>
</dbReference>
<dbReference type="Ensembl" id="ENST00000484866.5">
    <property type="protein sequence ID" value="ENSP00000418766.1"/>
    <property type="gene ID" value="ENSG00000121864.10"/>
</dbReference>
<dbReference type="Ensembl" id="ENST00000496856.6">
    <property type="protein sequence ID" value="ENSP00000417740.1"/>
    <property type="gene ID" value="ENSG00000121864.10"/>
</dbReference>
<dbReference type="Ensembl" id="ENST00000621687.1">
    <property type="protein sequence ID" value="ENSP00000477626.1"/>
    <property type="gene ID" value="ENSG00000121864.10"/>
</dbReference>
<dbReference type="GeneID" id="51193"/>
<dbReference type="KEGG" id="hsa:51193"/>
<dbReference type="MANE-Select" id="ENST00000496856.6">
    <property type="protein sequence ID" value="ENSP00000417740.1"/>
    <property type="RefSeq nucleotide sequence ID" value="NM_001303426.2"/>
    <property type="RefSeq protein sequence ID" value="NP_001290355.1"/>
</dbReference>
<dbReference type="UCSC" id="uc003fjq.2">
    <property type="organism name" value="human"/>
</dbReference>
<dbReference type="AGR" id="HGNC:30950"/>
<dbReference type="CTD" id="51193"/>
<dbReference type="DisGeNET" id="51193"/>
<dbReference type="GeneCards" id="ZNF639"/>
<dbReference type="HGNC" id="HGNC:30950">
    <property type="gene designation" value="ZNF639"/>
</dbReference>
<dbReference type="HPA" id="ENSG00000121864">
    <property type="expression patterns" value="Low tissue specificity"/>
</dbReference>
<dbReference type="MIM" id="619214">
    <property type="type" value="gene"/>
</dbReference>
<dbReference type="neXtProt" id="NX_Q9UID6"/>
<dbReference type="OpenTargets" id="ENSG00000121864"/>
<dbReference type="PharmGKB" id="PA134990796"/>
<dbReference type="VEuPathDB" id="HostDB:ENSG00000121864"/>
<dbReference type="eggNOG" id="KOG1721">
    <property type="taxonomic scope" value="Eukaryota"/>
</dbReference>
<dbReference type="GeneTree" id="ENSGT00940000156335"/>
<dbReference type="HOGENOM" id="CLU_569800_0_0_1"/>
<dbReference type="InParanoid" id="Q9UID6"/>
<dbReference type="OMA" id="PDINRGR"/>
<dbReference type="OrthoDB" id="6077919at2759"/>
<dbReference type="PAN-GO" id="Q9UID6">
    <property type="GO annotations" value="4 GO annotations based on evolutionary models"/>
</dbReference>
<dbReference type="PhylomeDB" id="Q9UID6"/>
<dbReference type="TreeFam" id="TF335557"/>
<dbReference type="PathwayCommons" id="Q9UID6"/>
<dbReference type="SignaLink" id="Q9UID6"/>
<dbReference type="BioGRID-ORCS" id="51193">
    <property type="hits" value="13 hits in 1175 CRISPR screens"/>
</dbReference>
<dbReference type="GenomeRNAi" id="51193"/>
<dbReference type="Pharos" id="Q9UID6">
    <property type="development level" value="Tbio"/>
</dbReference>
<dbReference type="PRO" id="PR:Q9UID6"/>
<dbReference type="Proteomes" id="UP000005640">
    <property type="component" value="Chromosome 3"/>
</dbReference>
<dbReference type="RNAct" id="Q9UID6">
    <property type="molecule type" value="protein"/>
</dbReference>
<dbReference type="Bgee" id="ENSG00000121864">
    <property type="expression patterns" value="Expressed in cortical plate and 183 other cell types or tissues"/>
</dbReference>
<dbReference type="ExpressionAtlas" id="Q9UID6">
    <property type="expression patterns" value="baseline and differential"/>
</dbReference>
<dbReference type="GO" id="GO:0005654">
    <property type="term" value="C:nucleoplasm"/>
    <property type="evidence" value="ECO:0000314"/>
    <property type="project" value="HPA"/>
</dbReference>
<dbReference type="GO" id="GO:0005634">
    <property type="term" value="C:nucleus"/>
    <property type="evidence" value="ECO:0000314"/>
    <property type="project" value="UniProtKB"/>
</dbReference>
<dbReference type="GO" id="GO:0001228">
    <property type="term" value="F:DNA-binding transcription activator activity, RNA polymerase II-specific"/>
    <property type="evidence" value="ECO:0000314"/>
    <property type="project" value="NTNU_SB"/>
</dbReference>
<dbReference type="GO" id="GO:0003700">
    <property type="term" value="F:DNA-binding transcription factor activity"/>
    <property type="evidence" value="ECO:0000314"/>
    <property type="project" value="UniProtKB"/>
</dbReference>
<dbReference type="GO" id="GO:0000978">
    <property type="term" value="F:RNA polymerase II cis-regulatory region sequence-specific DNA binding"/>
    <property type="evidence" value="ECO:0000314"/>
    <property type="project" value="NTNU_SB"/>
</dbReference>
<dbReference type="GO" id="GO:0000976">
    <property type="term" value="F:transcription cis-regulatory region binding"/>
    <property type="evidence" value="ECO:0000314"/>
    <property type="project" value="UniProtKB"/>
</dbReference>
<dbReference type="GO" id="GO:0008270">
    <property type="term" value="F:zinc ion binding"/>
    <property type="evidence" value="ECO:0007669"/>
    <property type="project" value="UniProtKB-KW"/>
</dbReference>
<dbReference type="GO" id="GO:0043922">
    <property type="term" value="P:negative regulation by host of viral transcription"/>
    <property type="evidence" value="ECO:0000315"/>
    <property type="project" value="UniProtKB"/>
</dbReference>
<dbReference type="GO" id="GO:0045892">
    <property type="term" value="P:negative regulation of DNA-templated transcription"/>
    <property type="evidence" value="ECO:0000314"/>
    <property type="project" value="UniProtKB"/>
</dbReference>
<dbReference type="GO" id="GO:0043923">
    <property type="term" value="P:positive regulation by host of viral transcription"/>
    <property type="evidence" value="ECO:0000315"/>
    <property type="project" value="UniProtKB"/>
</dbReference>
<dbReference type="GO" id="GO:0030307">
    <property type="term" value="P:positive regulation of cell growth"/>
    <property type="evidence" value="ECO:0000315"/>
    <property type="project" value="UniProtKB"/>
</dbReference>
<dbReference type="GO" id="GO:0045944">
    <property type="term" value="P:positive regulation of transcription by RNA polymerase II"/>
    <property type="evidence" value="ECO:0000314"/>
    <property type="project" value="NTNU_SB"/>
</dbReference>
<dbReference type="GO" id="GO:0006357">
    <property type="term" value="P:regulation of transcription by RNA polymerase II"/>
    <property type="evidence" value="ECO:0000318"/>
    <property type="project" value="GO_Central"/>
</dbReference>
<dbReference type="GO" id="GO:0046718">
    <property type="term" value="P:symbiont entry into host cell"/>
    <property type="evidence" value="ECO:0000314"/>
    <property type="project" value="UniProtKB"/>
</dbReference>
<dbReference type="FunFam" id="3.30.160.60:FF:000776">
    <property type="entry name" value="Zinc finger protein 639"/>
    <property type="match status" value="1"/>
</dbReference>
<dbReference type="FunFam" id="3.30.160.60:FF:001103">
    <property type="entry name" value="Zinc finger protein 639"/>
    <property type="match status" value="1"/>
</dbReference>
<dbReference type="FunFam" id="3.30.160.60:FF:001200">
    <property type="entry name" value="zinc finger protein 639"/>
    <property type="match status" value="1"/>
</dbReference>
<dbReference type="FunFam" id="3.30.160.60:FF:001222">
    <property type="entry name" value="zinc finger protein 639"/>
    <property type="match status" value="1"/>
</dbReference>
<dbReference type="Gene3D" id="3.30.160.60">
    <property type="entry name" value="Classic Zinc Finger"/>
    <property type="match status" value="4"/>
</dbReference>
<dbReference type="InterPro" id="IPR050527">
    <property type="entry name" value="Snail/Krueppel_Znf"/>
</dbReference>
<dbReference type="InterPro" id="IPR036236">
    <property type="entry name" value="Znf_C2H2_sf"/>
</dbReference>
<dbReference type="InterPro" id="IPR013087">
    <property type="entry name" value="Znf_C2H2_type"/>
</dbReference>
<dbReference type="PANTHER" id="PTHR24388:SF53">
    <property type="entry name" value="CHORION TRANSCRIPTION FACTOR CF2-RELATED"/>
    <property type="match status" value="1"/>
</dbReference>
<dbReference type="PANTHER" id="PTHR24388">
    <property type="entry name" value="ZINC FINGER PROTEIN"/>
    <property type="match status" value="1"/>
</dbReference>
<dbReference type="Pfam" id="PF00096">
    <property type="entry name" value="zf-C2H2"/>
    <property type="match status" value="1"/>
</dbReference>
<dbReference type="SMART" id="SM00355">
    <property type="entry name" value="ZnF_C2H2"/>
    <property type="match status" value="9"/>
</dbReference>
<dbReference type="SUPFAM" id="SSF57667">
    <property type="entry name" value="beta-beta-alpha zinc fingers"/>
    <property type="match status" value="4"/>
</dbReference>
<dbReference type="PROSITE" id="PS00028">
    <property type="entry name" value="ZINC_FINGER_C2H2_1"/>
    <property type="match status" value="4"/>
</dbReference>
<dbReference type="PROSITE" id="PS50157">
    <property type="entry name" value="ZINC_FINGER_C2H2_2"/>
    <property type="match status" value="5"/>
</dbReference>